<reference key="1">
    <citation type="journal article" date="2011" name="J. Bacteriol.">
        <title>Genome sequence of lineage III Listeria monocytogenes strain HCC23.</title>
        <authorList>
            <person name="Steele C.L."/>
            <person name="Donaldson J.R."/>
            <person name="Paul D."/>
            <person name="Banes M.M."/>
            <person name="Arick T."/>
            <person name="Bridges S.M."/>
            <person name="Lawrence M.L."/>
        </authorList>
    </citation>
    <scope>NUCLEOTIDE SEQUENCE [LARGE SCALE GENOMIC DNA]</scope>
    <source>
        <strain>HCC23</strain>
    </source>
</reference>
<organism>
    <name type="scientific">Listeria monocytogenes serotype 4a (strain HCC23)</name>
    <dbReference type="NCBI Taxonomy" id="552536"/>
    <lineage>
        <taxon>Bacteria</taxon>
        <taxon>Bacillati</taxon>
        <taxon>Bacillota</taxon>
        <taxon>Bacilli</taxon>
        <taxon>Bacillales</taxon>
        <taxon>Listeriaceae</taxon>
        <taxon>Listeria</taxon>
    </lineage>
</organism>
<keyword id="KW-0963">Cytoplasm</keyword>
<keyword id="KW-0227">DNA damage</keyword>
<keyword id="KW-0233">DNA recombination</keyword>
<keyword id="KW-0234">DNA repair</keyword>
<keyword id="KW-0238">DNA-binding</keyword>
<gene>
    <name evidence="1" type="primary">ruvA</name>
    <name type="ordered locus">LMHCC_1036</name>
</gene>
<protein>
    <recommendedName>
        <fullName evidence="1">Holliday junction branch migration complex subunit RuvA</fullName>
    </recommendedName>
</protein>
<evidence type="ECO:0000255" key="1">
    <source>
        <dbReference type="HAMAP-Rule" id="MF_00031"/>
    </source>
</evidence>
<comment type="function">
    <text evidence="1">The RuvA-RuvB-RuvC complex processes Holliday junction (HJ) DNA during genetic recombination and DNA repair, while the RuvA-RuvB complex plays an important role in the rescue of blocked DNA replication forks via replication fork reversal (RFR). RuvA specifically binds to HJ cruciform DNA, conferring on it an open structure. The RuvB hexamer acts as an ATP-dependent pump, pulling dsDNA into and through the RuvAB complex. HJ branch migration allows RuvC to scan DNA until it finds its consensus sequence, where it cleaves and resolves the cruciform DNA.</text>
</comment>
<comment type="subunit">
    <text evidence="1">Homotetramer. Forms an RuvA(8)-RuvB(12)-Holliday junction (HJ) complex. HJ DNA is sandwiched between 2 RuvA tetramers; dsDNA enters through RuvA and exits via RuvB. An RuvB hexamer assembles on each DNA strand where it exits the tetramer. Each RuvB hexamer is contacted by two RuvA subunits (via domain III) on 2 adjacent RuvB subunits; this complex drives branch migration. In the full resolvosome a probable DNA-RuvA(4)-RuvB(12)-RuvC(2) complex forms which resolves the HJ.</text>
</comment>
<comment type="subcellular location">
    <subcellularLocation>
        <location evidence="1">Cytoplasm</location>
    </subcellularLocation>
</comment>
<comment type="domain">
    <text evidence="1">Has three domains with a flexible linker between the domains II and III and assumes an 'L' shape. Domain III is highly mobile and contacts RuvB.</text>
</comment>
<comment type="similarity">
    <text evidence="1">Belongs to the RuvA family.</text>
</comment>
<feature type="chain" id="PRO_1000195154" description="Holliday junction branch migration complex subunit RuvA">
    <location>
        <begin position="1"/>
        <end position="201"/>
    </location>
</feature>
<feature type="region of interest" description="Domain I" evidence="1">
    <location>
        <begin position="1"/>
        <end position="63"/>
    </location>
</feature>
<feature type="region of interest" description="Domain II" evidence="1">
    <location>
        <begin position="64"/>
        <end position="142"/>
    </location>
</feature>
<feature type="region of interest" description="Flexible linker" evidence="1">
    <location>
        <begin position="143"/>
        <end position="153"/>
    </location>
</feature>
<feature type="region of interest" description="Domain III" evidence="1">
    <location>
        <begin position="153"/>
        <end position="201"/>
    </location>
</feature>
<sequence>MYDYIKGTVTTITPEYIVVEAGQIGYQIITGNPFSFQRLEGTEAQVFLYQHVREDNISLFGFQTTEERYLFKKLLSVSGIGPKSALAIIASGDVVPLISAIESEDDVYLTKFPSVGKKTARQIILDLKGKLADVVASEIVYVAPENDMVAGLSPQLEEAVLALEALGYSTRELKKVIPKLAKEEDLTSDAYIKLALQLMTK</sequence>
<dbReference type="EMBL" id="CP001175">
    <property type="protein sequence ID" value="ACK39384.1"/>
    <property type="molecule type" value="Genomic_DNA"/>
</dbReference>
<dbReference type="RefSeq" id="WP_003730213.1">
    <property type="nucleotide sequence ID" value="NC_011660.1"/>
</dbReference>
<dbReference type="SMR" id="B8DHL5"/>
<dbReference type="KEGG" id="lmh:LMHCC_1036"/>
<dbReference type="HOGENOM" id="CLU_087936_1_0_9"/>
<dbReference type="GO" id="GO:0005737">
    <property type="term" value="C:cytoplasm"/>
    <property type="evidence" value="ECO:0007669"/>
    <property type="project" value="UniProtKB-SubCell"/>
</dbReference>
<dbReference type="GO" id="GO:0009379">
    <property type="term" value="C:Holliday junction helicase complex"/>
    <property type="evidence" value="ECO:0007669"/>
    <property type="project" value="InterPro"/>
</dbReference>
<dbReference type="GO" id="GO:0048476">
    <property type="term" value="C:Holliday junction resolvase complex"/>
    <property type="evidence" value="ECO:0007669"/>
    <property type="project" value="UniProtKB-UniRule"/>
</dbReference>
<dbReference type="GO" id="GO:0005524">
    <property type="term" value="F:ATP binding"/>
    <property type="evidence" value="ECO:0007669"/>
    <property type="project" value="InterPro"/>
</dbReference>
<dbReference type="GO" id="GO:0000400">
    <property type="term" value="F:four-way junction DNA binding"/>
    <property type="evidence" value="ECO:0007669"/>
    <property type="project" value="UniProtKB-UniRule"/>
</dbReference>
<dbReference type="GO" id="GO:0009378">
    <property type="term" value="F:four-way junction helicase activity"/>
    <property type="evidence" value="ECO:0007669"/>
    <property type="project" value="InterPro"/>
</dbReference>
<dbReference type="GO" id="GO:0006310">
    <property type="term" value="P:DNA recombination"/>
    <property type="evidence" value="ECO:0007669"/>
    <property type="project" value="UniProtKB-UniRule"/>
</dbReference>
<dbReference type="GO" id="GO:0006281">
    <property type="term" value="P:DNA repair"/>
    <property type="evidence" value="ECO:0007669"/>
    <property type="project" value="UniProtKB-UniRule"/>
</dbReference>
<dbReference type="CDD" id="cd14332">
    <property type="entry name" value="UBA_RuvA_C"/>
    <property type="match status" value="1"/>
</dbReference>
<dbReference type="Gene3D" id="1.10.150.20">
    <property type="entry name" value="5' to 3' exonuclease, C-terminal subdomain"/>
    <property type="match status" value="1"/>
</dbReference>
<dbReference type="Gene3D" id="1.10.8.10">
    <property type="entry name" value="DNA helicase RuvA subunit, C-terminal domain"/>
    <property type="match status" value="1"/>
</dbReference>
<dbReference type="Gene3D" id="2.40.50.140">
    <property type="entry name" value="Nucleic acid-binding proteins"/>
    <property type="match status" value="1"/>
</dbReference>
<dbReference type="HAMAP" id="MF_00031">
    <property type="entry name" value="DNA_HJ_migration_RuvA"/>
    <property type="match status" value="1"/>
</dbReference>
<dbReference type="InterPro" id="IPR013849">
    <property type="entry name" value="DNA_helicase_Holl-junc_RuvA_I"/>
</dbReference>
<dbReference type="InterPro" id="IPR003583">
    <property type="entry name" value="Hlx-hairpin-Hlx_DNA-bd_motif"/>
</dbReference>
<dbReference type="InterPro" id="IPR012340">
    <property type="entry name" value="NA-bd_OB-fold"/>
</dbReference>
<dbReference type="InterPro" id="IPR000085">
    <property type="entry name" value="RuvA"/>
</dbReference>
<dbReference type="InterPro" id="IPR010994">
    <property type="entry name" value="RuvA_2-like"/>
</dbReference>
<dbReference type="InterPro" id="IPR011114">
    <property type="entry name" value="RuvA_C"/>
</dbReference>
<dbReference type="InterPro" id="IPR036267">
    <property type="entry name" value="RuvA_C_sf"/>
</dbReference>
<dbReference type="NCBIfam" id="TIGR00084">
    <property type="entry name" value="ruvA"/>
    <property type="match status" value="1"/>
</dbReference>
<dbReference type="Pfam" id="PF14520">
    <property type="entry name" value="HHH_5"/>
    <property type="match status" value="1"/>
</dbReference>
<dbReference type="Pfam" id="PF07499">
    <property type="entry name" value="RuvA_C"/>
    <property type="match status" value="1"/>
</dbReference>
<dbReference type="Pfam" id="PF01330">
    <property type="entry name" value="RuvA_N"/>
    <property type="match status" value="1"/>
</dbReference>
<dbReference type="SMART" id="SM00278">
    <property type="entry name" value="HhH1"/>
    <property type="match status" value="2"/>
</dbReference>
<dbReference type="SUPFAM" id="SSF46929">
    <property type="entry name" value="DNA helicase RuvA subunit, C-terminal domain"/>
    <property type="match status" value="1"/>
</dbReference>
<dbReference type="SUPFAM" id="SSF50249">
    <property type="entry name" value="Nucleic acid-binding proteins"/>
    <property type="match status" value="1"/>
</dbReference>
<dbReference type="SUPFAM" id="SSF47781">
    <property type="entry name" value="RuvA domain 2-like"/>
    <property type="match status" value="1"/>
</dbReference>
<proteinExistence type="inferred from homology"/>
<name>RUVA_LISMH</name>
<accession>B8DHL5</accession>